<accession>A2RGY1</accession>
<protein>
    <recommendedName>
        <fullName evidence="1">Histidine--tRNA ligase</fullName>
        <ecNumber evidence="1">6.1.1.21</ecNumber>
    </recommendedName>
    <alternativeName>
        <fullName evidence="1">Histidyl-tRNA synthetase</fullName>
        <shortName evidence="1">HisRS</shortName>
    </alternativeName>
</protein>
<gene>
    <name evidence="1" type="primary">hisS</name>
    <name type="ordered locus">SpyM51789</name>
</gene>
<reference key="1">
    <citation type="journal article" date="2007" name="J. Bacteriol.">
        <title>Complete genome of acute rheumatic fever-associated serotype M5 Streptococcus pyogenes strain Manfredo.</title>
        <authorList>
            <person name="Holden M.T.G."/>
            <person name="Scott A."/>
            <person name="Cherevach I."/>
            <person name="Chillingworth T."/>
            <person name="Churcher C."/>
            <person name="Cronin A."/>
            <person name="Dowd L."/>
            <person name="Feltwell T."/>
            <person name="Hamlin N."/>
            <person name="Holroyd S."/>
            <person name="Jagels K."/>
            <person name="Moule S."/>
            <person name="Mungall K."/>
            <person name="Quail M.A."/>
            <person name="Price C."/>
            <person name="Rabbinowitsch E."/>
            <person name="Sharp S."/>
            <person name="Skelton J."/>
            <person name="Whitehead S."/>
            <person name="Barrell B.G."/>
            <person name="Kehoe M."/>
            <person name="Parkhill J."/>
        </authorList>
    </citation>
    <scope>NUCLEOTIDE SEQUENCE [LARGE SCALE GENOMIC DNA]</scope>
    <source>
        <strain>Manfredo</strain>
    </source>
</reference>
<sequence length="426" mass="48286">MKLQKPKGTQDILPGDAAKWQYVESVARDTFSQYNYGEIRTPMFEHYEVISRSVGDTTDIVTKEMYDFYDKGDRHITLRPEGTAPVVRSYVENKLFAPEVQKPVKLYYIGSMFRYERPQAGRLREFHQIGVECFGAANPATDVETIAMAYHLFEKLGIKDVTLHLNSLGSPESRAAYRQALIDYLTPMRDQLSKDSQRRLDENPLRVLDSKEKEDKLAVEKAPSILDYLDEESQAHFEAVKDMLEALDIPYVIDTNMVRGLDYYNHTIFEFITSVEGSDLTICAGGRYDSLVGYFGGPETPGFGFGLGLERLLMIIEKQGITLPIETEMDVYLAVLGDGANSKALELVQAIRRQGFTAERDYLGRKIKAQFKSADTFKAKLVMTLGESEVEAGKAVIKNNRSRQELEVSFEDMMTNFENISEQLLS</sequence>
<evidence type="ECO:0000255" key="1">
    <source>
        <dbReference type="HAMAP-Rule" id="MF_00127"/>
    </source>
</evidence>
<keyword id="KW-0030">Aminoacyl-tRNA synthetase</keyword>
<keyword id="KW-0067">ATP-binding</keyword>
<keyword id="KW-0963">Cytoplasm</keyword>
<keyword id="KW-0436">Ligase</keyword>
<keyword id="KW-0547">Nucleotide-binding</keyword>
<keyword id="KW-0648">Protein biosynthesis</keyword>
<organism>
    <name type="scientific">Streptococcus pyogenes serotype M5 (strain Manfredo)</name>
    <dbReference type="NCBI Taxonomy" id="160491"/>
    <lineage>
        <taxon>Bacteria</taxon>
        <taxon>Bacillati</taxon>
        <taxon>Bacillota</taxon>
        <taxon>Bacilli</taxon>
        <taxon>Lactobacillales</taxon>
        <taxon>Streptococcaceae</taxon>
        <taxon>Streptococcus</taxon>
    </lineage>
</organism>
<dbReference type="EC" id="6.1.1.21" evidence="1"/>
<dbReference type="EMBL" id="AM295007">
    <property type="protein sequence ID" value="CAM31113.1"/>
    <property type="molecule type" value="Genomic_DNA"/>
</dbReference>
<dbReference type="RefSeq" id="WP_011889242.1">
    <property type="nucleotide sequence ID" value="NC_009332.1"/>
</dbReference>
<dbReference type="SMR" id="A2RGY1"/>
<dbReference type="KEGG" id="spf:SpyM51789"/>
<dbReference type="HOGENOM" id="CLU_025113_1_1_9"/>
<dbReference type="GO" id="GO:0005737">
    <property type="term" value="C:cytoplasm"/>
    <property type="evidence" value="ECO:0007669"/>
    <property type="project" value="UniProtKB-SubCell"/>
</dbReference>
<dbReference type="GO" id="GO:0005524">
    <property type="term" value="F:ATP binding"/>
    <property type="evidence" value="ECO:0007669"/>
    <property type="project" value="UniProtKB-UniRule"/>
</dbReference>
<dbReference type="GO" id="GO:0140096">
    <property type="term" value="F:catalytic activity, acting on a protein"/>
    <property type="evidence" value="ECO:0007669"/>
    <property type="project" value="UniProtKB-ARBA"/>
</dbReference>
<dbReference type="GO" id="GO:0004821">
    <property type="term" value="F:histidine-tRNA ligase activity"/>
    <property type="evidence" value="ECO:0007669"/>
    <property type="project" value="UniProtKB-UniRule"/>
</dbReference>
<dbReference type="GO" id="GO:0016740">
    <property type="term" value="F:transferase activity"/>
    <property type="evidence" value="ECO:0007669"/>
    <property type="project" value="UniProtKB-ARBA"/>
</dbReference>
<dbReference type="GO" id="GO:0006427">
    <property type="term" value="P:histidyl-tRNA aminoacylation"/>
    <property type="evidence" value="ECO:0007669"/>
    <property type="project" value="UniProtKB-UniRule"/>
</dbReference>
<dbReference type="CDD" id="cd00773">
    <property type="entry name" value="HisRS-like_core"/>
    <property type="match status" value="1"/>
</dbReference>
<dbReference type="CDD" id="cd00859">
    <property type="entry name" value="HisRS_anticodon"/>
    <property type="match status" value="1"/>
</dbReference>
<dbReference type="FunFam" id="3.30.930.10:FF:000005">
    <property type="entry name" value="Histidine--tRNA ligase"/>
    <property type="match status" value="1"/>
</dbReference>
<dbReference type="Gene3D" id="3.40.50.800">
    <property type="entry name" value="Anticodon-binding domain"/>
    <property type="match status" value="1"/>
</dbReference>
<dbReference type="Gene3D" id="3.30.930.10">
    <property type="entry name" value="Bira Bifunctional Protein, Domain 2"/>
    <property type="match status" value="1"/>
</dbReference>
<dbReference type="HAMAP" id="MF_00127">
    <property type="entry name" value="His_tRNA_synth"/>
    <property type="match status" value="1"/>
</dbReference>
<dbReference type="InterPro" id="IPR006195">
    <property type="entry name" value="aa-tRNA-synth_II"/>
</dbReference>
<dbReference type="InterPro" id="IPR045864">
    <property type="entry name" value="aa-tRNA-synth_II/BPL/LPL"/>
</dbReference>
<dbReference type="InterPro" id="IPR004154">
    <property type="entry name" value="Anticodon-bd"/>
</dbReference>
<dbReference type="InterPro" id="IPR036621">
    <property type="entry name" value="Anticodon-bd_dom_sf"/>
</dbReference>
<dbReference type="InterPro" id="IPR015807">
    <property type="entry name" value="His-tRNA-ligase"/>
</dbReference>
<dbReference type="InterPro" id="IPR041715">
    <property type="entry name" value="HisRS-like_core"/>
</dbReference>
<dbReference type="InterPro" id="IPR004516">
    <property type="entry name" value="HisRS/HisZ"/>
</dbReference>
<dbReference type="InterPro" id="IPR033656">
    <property type="entry name" value="HisRS_anticodon"/>
</dbReference>
<dbReference type="NCBIfam" id="TIGR00442">
    <property type="entry name" value="hisS"/>
    <property type="match status" value="1"/>
</dbReference>
<dbReference type="PANTHER" id="PTHR43707:SF1">
    <property type="entry name" value="HISTIDINE--TRNA LIGASE, MITOCHONDRIAL-RELATED"/>
    <property type="match status" value="1"/>
</dbReference>
<dbReference type="PANTHER" id="PTHR43707">
    <property type="entry name" value="HISTIDYL-TRNA SYNTHETASE"/>
    <property type="match status" value="1"/>
</dbReference>
<dbReference type="Pfam" id="PF03129">
    <property type="entry name" value="HGTP_anticodon"/>
    <property type="match status" value="1"/>
</dbReference>
<dbReference type="Pfam" id="PF13393">
    <property type="entry name" value="tRNA-synt_His"/>
    <property type="match status" value="1"/>
</dbReference>
<dbReference type="PIRSF" id="PIRSF001549">
    <property type="entry name" value="His-tRNA_synth"/>
    <property type="match status" value="1"/>
</dbReference>
<dbReference type="SUPFAM" id="SSF52954">
    <property type="entry name" value="Class II aaRS ABD-related"/>
    <property type="match status" value="1"/>
</dbReference>
<dbReference type="SUPFAM" id="SSF55681">
    <property type="entry name" value="Class II aaRS and biotin synthetases"/>
    <property type="match status" value="1"/>
</dbReference>
<dbReference type="PROSITE" id="PS50862">
    <property type="entry name" value="AA_TRNA_LIGASE_II"/>
    <property type="match status" value="1"/>
</dbReference>
<comment type="catalytic activity">
    <reaction evidence="1">
        <text>tRNA(His) + L-histidine + ATP = L-histidyl-tRNA(His) + AMP + diphosphate + H(+)</text>
        <dbReference type="Rhea" id="RHEA:17313"/>
        <dbReference type="Rhea" id="RHEA-COMP:9665"/>
        <dbReference type="Rhea" id="RHEA-COMP:9689"/>
        <dbReference type="ChEBI" id="CHEBI:15378"/>
        <dbReference type="ChEBI" id="CHEBI:30616"/>
        <dbReference type="ChEBI" id="CHEBI:33019"/>
        <dbReference type="ChEBI" id="CHEBI:57595"/>
        <dbReference type="ChEBI" id="CHEBI:78442"/>
        <dbReference type="ChEBI" id="CHEBI:78527"/>
        <dbReference type="ChEBI" id="CHEBI:456215"/>
        <dbReference type="EC" id="6.1.1.21"/>
    </reaction>
</comment>
<comment type="subunit">
    <text evidence="1">Homodimer.</text>
</comment>
<comment type="subcellular location">
    <subcellularLocation>
        <location evidence="1">Cytoplasm</location>
    </subcellularLocation>
</comment>
<comment type="similarity">
    <text evidence="1">Belongs to the class-II aminoacyl-tRNA synthetase family.</text>
</comment>
<proteinExistence type="inferred from homology"/>
<feature type="chain" id="PRO_1000016464" description="Histidine--tRNA ligase">
    <location>
        <begin position="1"/>
        <end position="426"/>
    </location>
</feature>
<name>SYH_STRPG</name>